<proteinExistence type="inferred from homology"/>
<protein>
    <recommendedName>
        <fullName evidence="1">Bifunctional enzyme IspD/IspF</fullName>
    </recommendedName>
    <domain>
        <recommendedName>
            <fullName evidence="1">2-C-methyl-D-erythritol 4-phosphate cytidylyltransferase</fullName>
            <ecNumber evidence="1">2.7.7.60</ecNumber>
        </recommendedName>
        <alternativeName>
            <fullName evidence="1">4-diphosphocytidyl-2C-methyl-D-erythritol synthase</fullName>
        </alternativeName>
        <alternativeName>
            <fullName evidence="1">MEP cytidylyltransferase</fullName>
            <shortName evidence="1">MCT</shortName>
        </alternativeName>
    </domain>
    <domain>
        <recommendedName>
            <fullName evidence="1">2-C-methyl-D-erythritol 2,4-cyclodiphosphate synthase</fullName>
            <shortName evidence="1">MECDP-synthase</shortName>
            <shortName evidence="1">MECPP-synthase</shortName>
            <shortName evidence="1">MECPS</shortName>
            <ecNumber evidence="1">4.6.1.12</ecNumber>
        </recommendedName>
    </domain>
</protein>
<keyword id="KW-0414">Isoprene biosynthesis</keyword>
<keyword id="KW-0456">Lyase</keyword>
<keyword id="KW-0479">Metal-binding</keyword>
<keyword id="KW-0511">Multifunctional enzyme</keyword>
<keyword id="KW-0548">Nucleotidyltransferase</keyword>
<keyword id="KW-1185">Reference proteome</keyword>
<keyword id="KW-0808">Transferase</keyword>
<evidence type="ECO:0000255" key="1">
    <source>
        <dbReference type="HAMAP-Rule" id="MF_01520"/>
    </source>
</evidence>
<dbReference type="EC" id="2.7.7.60" evidence="1"/>
<dbReference type="EC" id="4.6.1.12" evidence="1"/>
<dbReference type="EMBL" id="CP000153">
    <property type="protein sequence ID" value="ABB44764.1"/>
    <property type="molecule type" value="Genomic_DNA"/>
</dbReference>
<dbReference type="SMR" id="Q30QG7"/>
<dbReference type="STRING" id="326298.Suden_1487"/>
<dbReference type="KEGG" id="tdn:Suden_1487"/>
<dbReference type="eggNOG" id="COG0245">
    <property type="taxonomic scope" value="Bacteria"/>
</dbReference>
<dbReference type="eggNOG" id="COG1211">
    <property type="taxonomic scope" value="Bacteria"/>
</dbReference>
<dbReference type="HOGENOM" id="CLU_042800_2_6_7"/>
<dbReference type="UniPathway" id="UPA00056">
    <property type="reaction ID" value="UER00093"/>
</dbReference>
<dbReference type="UniPathway" id="UPA00056">
    <property type="reaction ID" value="UER00095"/>
</dbReference>
<dbReference type="Proteomes" id="UP000002714">
    <property type="component" value="Chromosome"/>
</dbReference>
<dbReference type="GO" id="GO:0008685">
    <property type="term" value="F:2-C-methyl-D-erythritol 2,4-cyclodiphosphate synthase activity"/>
    <property type="evidence" value="ECO:0007669"/>
    <property type="project" value="UniProtKB-UniRule"/>
</dbReference>
<dbReference type="GO" id="GO:0050518">
    <property type="term" value="F:2-C-methyl-D-erythritol 4-phosphate cytidylyltransferase activity"/>
    <property type="evidence" value="ECO:0007669"/>
    <property type="project" value="UniProtKB-UniRule"/>
</dbReference>
<dbReference type="GO" id="GO:0046872">
    <property type="term" value="F:metal ion binding"/>
    <property type="evidence" value="ECO:0007669"/>
    <property type="project" value="UniProtKB-KW"/>
</dbReference>
<dbReference type="GO" id="GO:0019288">
    <property type="term" value="P:isopentenyl diphosphate biosynthetic process, methylerythritol 4-phosphate pathway"/>
    <property type="evidence" value="ECO:0007669"/>
    <property type="project" value="UniProtKB-UniRule"/>
</dbReference>
<dbReference type="GO" id="GO:0016114">
    <property type="term" value="P:terpenoid biosynthetic process"/>
    <property type="evidence" value="ECO:0007669"/>
    <property type="project" value="InterPro"/>
</dbReference>
<dbReference type="CDD" id="cd02516">
    <property type="entry name" value="CDP-ME_synthetase"/>
    <property type="match status" value="1"/>
</dbReference>
<dbReference type="CDD" id="cd00554">
    <property type="entry name" value="MECDP_synthase"/>
    <property type="match status" value="1"/>
</dbReference>
<dbReference type="Gene3D" id="3.30.1330.50">
    <property type="entry name" value="2-C-methyl-D-erythritol 2,4-cyclodiphosphate synthase"/>
    <property type="match status" value="1"/>
</dbReference>
<dbReference type="Gene3D" id="3.90.550.10">
    <property type="entry name" value="Spore Coat Polysaccharide Biosynthesis Protein SpsA, Chain A"/>
    <property type="match status" value="1"/>
</dbReference>
<dbReference type="HAMAP" id="MF_01520">
    <property type="entry name" value="IspDF"/>
    <property type="match status" value="1"/>
</dbReference>
<dbReference type="HAMAP" id="MF_00107">
    <property type="entry name" value="IspF"/>
    <property type="match status" value="1"/>
</dbReference>
<dbReference type="InterPro" id="IPR026596">
    <property type="entry name" value="IspD/F"/>
</dbReference>
<dbReference type="InterPro" id="IPR034683">
    <property type="entry name" value="IspD/TarI"/>
</dbReference>
<dbReference type="InterPro" id="IPR018294">
    <property type="entry name" value="ISPD_synthase_CS"/>
</dbReference>
<dbReference type="InterPro" id="IPR003526">
    <property type="entry name" value="MECDP_synthase"/>
</dbReference>
<dbReference type="InterPro" id="IPR020555">
    <property type="entry name" value="MECDP_synthase_CS"/>
</dbReference>
<dbReference type="InterPro" id="IPR036571">
    <property type="entry name" value="MECDP_synthase_sf"/>
</dbReference>
<dbReference type="InterPro" id="IPR029044">
    <property type="entry name" value="Nucleotide-diphossugar_trans"/>
</dbReference>
<dbReference type="NCBIfam" id="TIGR00151">
    <property type="entry name" value="ispF"/>
    <property type="match status" value="1"/>
</dbReference>
<dbReference type="NCBIfam" id="NF006899">
    <property type="entry name" value="PRK09382.1"/>
    <property type="match status" value="1"/>
</dbReference>
<dbReference type="PANTHER" id="PTHR43181">
    <property type="entry name" value="2-C-METHYL-D-ERYTHRITOL 2,4-CYCLODIPHOSPHATE SYNTHASE, CHLOROPLASTIC"/>
    <property type="match status" value="1"/>
</dbReference>
<dbReference type="PANTHER" id="PTHR43181:SF1">
    <property type="entry name" value="2-C-METHYL-D-ERYTHRITOL 2,4-CYCLODIPHOSPHATE SYNTHASE, CHLOROPLASTIC"/>
    <property type="match status" value="1"/>
</dbReference>
<dbReference type="Pfam" id="PF01128">
    <property type="entry name" value="IspD"/>
    <property type="match status" value="1"/>
</dbReference>
<dbReference type="Pfam" id="PF02542">
    <property type="entry name" value="YgbB"/>
    <property type="match status" value="1"/>
</dbReference>
<dbReference type="SUPFAM" id="SSF69765">
    <property type="entry name" value="IpsF-like"/>
    <property type="match status" value="1"/>
</dbReference>
<dbReference type="SUPFAM" id="SSF53448">
    <property type="entry name" value="Nucleotide-diphospho-sugar transferases"/>
    <property type="match status" value="1"/>
</dbReference>
<dbReference type="PROSITE" id="PS01295">
    <property type="entry name" value="ISPD"/>
    <property type="match status" value="1"/>
</dbReference>
<dbReference type="PROSITE" id="PS01350">
    <property type="entry name" value="ISPF"/>
    <property type="match status" value="1"/>
</dbReference>
<sequence length="386" mass="42678">MYNFVTLSILGAYLHTITLILLAAGSSSRFELDIKKQWLRVGDRPLWHFVADRCEKTGYFDKIIITSSLDDIEFMKNYADYTFVEGGQTRQQSLKNSLLHVDTEYVLVSDVARSCIDEAFLKKIISHVGKSDAVVPYLNITDTIVYDDKTIDRERVKRVQTPQLSLTTALKSALLREEEFTDESSAIVANGGSREFILGQESAHKITHIEDLKKLSCLSAPSSDTLSGVGFDVHAFDDKGEMFLGGIKIDSEYGFLAHSDGDVAIHALIDALLGAAGMGDIGMMFPDNDVKYKGADSKELLGTLVTKLRHFGFVIVNVDITIAAEKPRIGNYKMAMRKKISSILGIDAQRVNIKATTTEKLGFIGRGEGVGVIANANLKYFDWTKI</sequence>
<reference key="1">
    <citation type="journal article" date="2008" name="Appl. Environ. Microbiol.">
        <title>Genome of the epsilonproteobacterial chemolithoautotroph Sulfurimonas denitrificans.</title>
        <authorList>
            <person name="Sievert S.M."/>
            <person name="Scott K.M."/>
            <person name="Klotz M.G."/>
            <person name="Chain P.S.G."/>
            <person name="Hauser L.J."/>
            <person name="Hemp J."/>
            <person name="Huegler M."/>
            <person name="Land M."/>
            <person name="Lapidus A."/>
            <person name="Larimer F.W."/>
            <person name="Lucas S."/>
            <person name="Malfatti S.A."/>
            <person name="Meyer F."/>
            <person name="Paulsen I.T."/>
            <person name="Ren Q."/>
            <person name="Simon J."/>
            <person name="Bailey K."/>
            <person name="Diaz E."/>
            <person name="Fitzpatrick K.A."/>
            <person name="Glover B."/>
            <person name="Gwatney N."/>
            <person name="Korajkic A."/>
            <person name="Long A."/>
            <person name="Mobberley J.M."/>
            <person name="Pantry S.N."/>
            <person name="Pazder G."/>
            <person name="Peterson S."/>
            <person name="Quintanilla J.D."/>
            <person name="Sprinkle R."/>
            <person name="Stephens J."/>
            <person name="Thomas P."/>
            <person name="Vaughn R."/>
            <person name="Weber M.J."/>
            <person name="Wooten L.L."/>
        </authorList>
    </citation>
    <scope>NUCLEOTIDE SEQUENCE [LARGE SCALE GENOMIC DNA]</scope>
    <source>
        <strain>ATCC 33889 / DSM 1251</strain>
    </source>
</reference>
<comment type="function">
    <text evidence="1">Bifunctional enzyme that catalyzes the formation of 4-diphosphocytidyl-2-C-methyl-D-erythritol from CTP and 2-C-methyl-D-erythritol 4-phosphate (MEP) (IspD), and catalyzes the conversion of 4-diphosphocytidyl-2-C-methyl-D-erythritol 2-phosphate (CDP-ME2P) to 2-C-methyl-D-erythritol 2,4-cyclodiphosphate (ME-CPP) with a corresponding release of cytidine 5-monophosphate (CMP) (IspF).</text>
</comment>
<comment type="catalytic activity">
    <reaction evidence="1">
        <text>2-C-methyl-D-erythritol 4-phosphate + CTP + H(+) = 4-CDP-2-C-methyl-D-erythritol + diphosphate</text>
        <dbReference type="Rhea" id="RHEA:13429"/>
        <dbReference type="ChEBI" id="CHEBI:15378"/>
        <dbReference type="ChEBI" id="CHEBI:33019"/>
        <dbReference type="ChEBI" id="CHEBI:37563"/>
        <dbReference type="ChEBI" id="CHEBI:57823"/>
        <dbReference type="ChEBI" id="CHEBI:58262"/>
        <dbReference type="EC" id="2.7.7.60"/>
    </reaction>
</comment>
<comment type="catalytic activity">
    <reaction evidence="1">
        <text>4-CDP-2-C-methyl-D-erythritol 2-phosphate = 2-C-methyl-D-erythritol 2,4-cyclic diphosphate + CMP</text>
        <dbReference type="Rhea" id="RHEA:23864"/>
        <dbReference type="ChEBI" id="CHEBI:57919"/>
        <dbReference type="ChEBI" id="CHEBI:58483"/>
        <dbReference type="ChEBI" id="CHEBI:60377"/>
        <dbReference type="EC" id="4.6.1.12"/>
    </reaction>
</comment>
<comment type="cofactor">
    <cofactor evidence="1">
        <name>a divalent metal cation</name>
        <dbReference type="ChEBI" id="CHEBI:60240"/>
    </cofactor>
</comment>
<comment type="pathway">
    <text evidence="1">Isoprenoid biosynthesis; isopentenyl diphosphate biosynthesis via DXP pathway; isopentenyl diphosphate from 1-deoxy-D-xylulose 5-phosphate: step 2/6.</text>
</comment>
<comment type="pathway">
    <text evidence="1">Isoprenoid biosynthesis; isopentenyl diphosphate biosynthesis via DXP pathway; isopentenyl diphosphate from 1-deoxy-D-xylulose 5-phosphate: step 4/6.</text>
</comment>
<comment type="similarity">
    <text evidence="1">In the N-terminal section; belongs to the IspD/TarI cytidylyltransferase family. IspD subfamily.</text>
</comment>
<comment type="similarity">
    <text evidence="1">In the C-terminal section; belongs to the IspF family.</text>
</comment>
<feature type="chain" id="PRO_0000292862" description="Bifunctional enzyme IspD/IspF">
    <location>
        <begin position="1"/>
        <end position="386"/>
    </location>
</feature>
<feature type="region of interest" description="2-C-methyl-D-erythritol 4-phosphate cytidylyltransferase" evidence="1">
    <location>
        <begin position="1"/>
        <end position="225"/>
    </location>
</feature>
<feature type="region of interest" description="2-C-methyl-D-erythritol 2,4-cyclodiphosphate synthase" evidence="1">
    <location>
        <begin position="226"/>
        <end position="386"/>
    </location>
</feature>
<feature type="binding site" evidence="1">
    <location>
        <begin position="232"/>
        <end position="234"/>
    </location>
    <ligand>
        <name>4-CDP-2-C-methyl-D-erythritol 2-phosphate</name>
        <dbReference type="ChEBI" id="CHEBI:57919"/>
    </ligand>
</feature>
<feature type="binding site" evidence="1">
    <location>
        <position position="232"/>
    </location>
    <ligand>
        <name>a divalent metal cation</name>
        <dbReference type="ChEBI" id="CHEBI:60240"/>
    </ligand>
</feature>
<feature type="binding site" evidence="1">
    <location>
        <position position="234"/>
    </location>
    <ligand>
        <name>a divalent metal cation</name>
        <dbReference type="ChEBI" id="CHEBI:60240"/>
    </ligand>
</feature>
<feature type="binding site" evidence="1">
    <location>
        <begin position="258"/>
        <end position="259"/>
    </location>
    <ligand>
        <name>4-CDP-2-C-methyl-D-erythritol 2-phosphate</name>
        <dbReference type="ChEBI" id="CHEBI:57919"/>
    </ligand>
</feature>
<feature type="binding site" evidence="1">
    <location>
        <position position="266"/>
    </location>
    <ligand>
        <name>a divalent metal cation</name>
        <dbReference type="ChEBI" id="CHEBI:60240"/>
    </ligand>
</feature>
<feature type="binding site" evidence="1">
    <location>
        <begin position="280"/>
        <end position="282"/>
    </location>
    <ligand>
        <name>4-CDP-2-C-methyl-D-erythritol 2-phosphate</name>
        <dbReference type="ChEBI" id="CHEBI:57919"/>
    </ligand>
</feature>
<feature type="binding site" evidence="1">
    <location>
        <begin position="285"/>
        <end position="289"/>
    </location>
    <ligand>
        <name>4-CDP-2-C-methyl-D-erythritol 2-phosphate</name>
        <dbReference type="ChEBI" id="CHEBI:57919"/>
    </ligand>
</feature>
<feature type="binding site" evidence="1">
    <location>
        <begin position="356"/>
        <end position="359"/>
    </location>
    <ligand>
        <name>4-CDP-2-C-methyl-D-erythritol 2-phosphate</name>
        <dbReference type="ChEBI" id="CHEBI:57919"/>
    </ligand>
</feature>
<feature type="binding site" evidence="1">
    <location>
        <position position="363"/>
    </location>
    <ligand>
        <name>4-CDP-2-C-methyl-D-erythritol 2-phosphate</name>
        <dbReference type="ChEBI" id="CHEBI:57919"/>
    </ligand>
</feature>
<feature type="binding site" evidence="1">
    <location>
        <position position="366"/>
    </location>
    <ligand>
        <name>4-CDP-2-C-methyl-D-erythritol 2-phosphate</name>
        <dbReference type="ChEBI" id="CHEBI:57919"/>
    </ligand>
</feature>
<feature type="site" description="Transition state stabilizer" evidence="1">
    <location>
        <position position="29"/>
    </location>
</feature>
<feature type="site" description="Transition state stabilizer" evidence="1">
    <location>
        <position position="36"/>
    </location>
</feature>
<feature type="site" description="Positions MEP for the nucleophilic attack" evidence="1">
    <location>
        <position position="153"/>
    </location>
</feature>
<feature type="site" description="Positions MEP for the nucleophilic attack" evidence="1">
    <location>
        <position position="205"/>
    </location>
</feature>
<feature type="site" description="Transition state stabilizer" evidence="1">
    <location>
        <position position="258"/>
    </location>
</feature>
<feature type="site" description="Transition state stabilizer" evidence="1">
    <location>
        <position position="357"/>
    </location>
</feature>
<name>ISPDF_SULDN</name>
<organism>
    <name type="scientific">Sulfurimonas denitrificans (strain ATCC 33889 / DSM 1251)</name>
    <name type="common">Thiomicrospira denitrificans (strain ATCC 33889 / DSM 1251)</name>
    <dbReference type="NCBI Taxonomy" id="326298"/>
    <lineage>
        <taxon>Bacteria</taxon>
        <taxon>Pseudomonadati</taxon>
        <taxon>Campylobacterota</taxon>
        <taxon>Epsilonproteobacteria</taxon>
        <taxon>Campylobacterales</taxon>
        <taxon>Sulfurimonadaceae</taxon>
        <taxon>Sulfurimonas</taxon>
    </lineage>
</organism>
<gene>
    <name evidence="1" type="primary">ispDF</name>
    <name type="ordered locus">Suden_1487</name>
</gene>
<accession>Q30QG7</accession>